<comment type="function">
    <text evidence="3 6">Polymerizes chitin, a structural polymer of the cell wall and septum, by transferring the sugar moiety of UDP-GlcNAc to the non-reducing end of the growing chitin polymer (Probable). Contributes to the production of conidia but is the only chitine synthase that does not contribute to the ability of fungal conidia to germinate (PubMed:31461507). Involved in fungal stress tolerances (PubMed:31461507).</text>
</comment>
<comment type="catalytic activity">
    <reaction evidence="6">
        <text>[(1-&gt;4)-N-acetyl-beta-D-glucosaminyl](n) + UDP-N-acetyl-alpha-D-glucosamine = [(1-&gt;4)-N-acetyl-beta-D-glucosaminyl](n+1) + UDP + H(+)</text>
        <dbReference type="Rhea" id="RHEA:16637"/>
        <dbReference type="Rhea" id="RHEA-COMP:9593"/>
        <dbReference type="Rhea" id="RHEA-COMP:9595"/>
        <dbReference type="ChEBI" id="CHEBI:15378"/>
        <dbReference type="ChEBI" id="CHEBI:17029"/>
        <dbReference type="ChEBI" id="CHEBI:57705"/>
        <dbReference type="ChEBI" id="CHEBI:58223"/>
        <dbReference type="EC" id="2.4.1.16"/>
    </reaction>
    <physiologicalReaction direction="left-to-right" evidence="6">
        <dbReference type="Rhea" id="RHEA:16638"/>
    </physiologicalReaction>
</comment>
<comment type="subcellular location">
    <subcellularLocation>
        <location evidence="5">Cell membrane</location>
        <topology evidence="1">Multi-pass membrane protein</topology>
    </subcellularLocation>
</comment>
<comment type="tissue specificity">
    <text evidence="3">Moderately expressed during appressorium formation.</text>
</comment>
<comment type="disruption phenotype">
    <text evidence="3">Increases fungal sensitivity to heat.</text>
</comment>
<comment type="similarity">
    <text evidence="5">Belongs to the chitin synthase family. Class VI subfamily.</text>
</comment>
<gene>
    <name evidence="4" type="primary">ChsVI</name>
    <name type="ORF">MAC_08626</name>
</gene>
<sequence>MIVTLPLPPAIANWWPEAVTSFLQWFAFWSFSILLTVPWLFCIYQLVTNHLGRTKRIKRVLDDYTAPKVVVVMPCYREEPDVLISAIDSVVQCDYPAPCIHVFLSFDGEQVDELYLNTLGLLGVPTTLDSYPNCIDVIYKGVRITVSRFSHGGKRQCQKSTFELIDRVYADYIKQNDNIFILFIDSDCILDRVCLQNFVYDMELSPGNSRKMLAMTGVITSTTKKHSIITLLQDMEYIHGQLFERTVESGCGSVTCLPGALTMLRFSAFRRMAKYYFADKAEECDDLFDYAKCHLGEDRWLTHLFMIGAKQRYQIQMCTSAFCKTEAVQTYASLVKQRRRWFLGFITNEVCMLTDWRLWKRYPALILVRFMQNTIRTTALLFFVMVLALLTTTASVRNLPVGFMAVSLGLNWLLMLYFGAKLKRFKIWFYPLMFVLNPLFNWYYMVYGILTAGQRTWGGPRADAAAADIHTTAREAAEQAERQGDELNIVPETFKPAKEARTIVHQNQGPGIPIVRKRSVVRPPDVVDGQFSGPRNIKGVPYASRRHLQHAEPISEQANPWPAYDADGILARGGEGDAYMSDEDKRKYAIAHQAQRLRLEQRPRTGPSLNARWQNGPQASETSQGRSQVDDVGIAF</sequence>
<proteinExistence type="evidence at transcript level"/>
<reference key="1">
    <citation type="journal article" date="2011" name="PLoS Genet.">
        <title>Genome sequencing and comparative transcriptomics of the model entomopathogenic fungi Metarhizium anisopliae and M. acridum.</title>
        <authorList>
            <person name="Gao Q."/>
            <person name="Jin K."/>
            <person name="Ying S.-H."/>
            <person name="Zhang Y."/>
            <person name="Xiao G."/>
            <person name="Shang Y."/>
            <person name="Duan Z."/>
            <person name="Hu X."/>
            <person name="Xie X.-Q."/>
            <person name="Zhou G."/>
            <person name="Peng G."/>
            <person name="Luo Z."/>
            <person name="Huang W."/>
            <person name="Wang B."/>
            <person name="Fang W."/>
            <person name="Wang S."/>
            <person name="Zhong Y."/>
            <person name="Ma L.-J."/>
            <person name="St Leger R.J."/>
            <person name="Zhao G.-P."/>
            <person name="Pei Y."/>
            <person name="Feng M.-G."/>
            <person name="Xia Y."/>
            <person name="Wang C."/>
        </authorList>
    </citation>
    <scope>NUCLEOTIDE SEQUENCE [LARGE SCALE GENOMIC DNA]</scope>
    <source>
        <strain>CQMa 102</strain>
    </source>
</reference>
<reference key="2">
    <citation type="journal article" date="2019" name="PLoS Pathog.">
        <title>Members of chitin synthase family in Metarhizium acridum differentially affect fungal growth, stress tolerances, cell wall integrity and virulence.</title>
        <authorList>
            <person name="Zhang J."/>
            <person name="Jiang H."/>
            <person name="Du Y."/>
            <person name="Keyhani N.O."/>
            <person name="Xia Y."/>
            <person name="Jin K."/>
        </authorList>
    </citation>
    <scope>FUNCTION</scope>
    <scope>DISRUPTION PHENOTYPE</scope>
    <scope>TISSUE SPECIFICITY</scope>
</reference>
<evidence type="ECO:0000255" key="1"/>
<evidence type="ECO:0000256" key="2">
    <source>
        <dbReference type="SAM" id="MobiDB-lite"/>
    </source>
</evidence>
<evidence type="ECO:0000269" key="3">
    <source>
    </source>
</evidence>
<evidence type="ECO:0000303" key="4">
    <source>
    </source>
</evidence>
<evidence type="ECO:0000305" key="5"/>
<evidence type="ECO:0000305" key="6">
    <source>
    </source>
</evidence>
<keyword id="KW-1003">Cell membrane</keyword>
<keyword id="KW-0328">Glycosyltransferase</keyword>
<keyword id="KW-0472">Membrane</keyword>
<keyword id="KW-1185">Reference proteome</keyword>
<keyword id="KW-0808">Transferase</keyword>
<keyword id="KW-0812">Transmembrane</keyword>
<keyword id="KW-1133">Transmembrane helix</keyword>
<protein>
    <recommendedName>
        <fullName evidence="4">Chitin synthase VI</fullName>
        <ecNumber evidence="6">2.4.1.16</ecNumber>
    </recommendedName>
    <alternativeName>
        <fullName evidence="5">Chitin-UDP acetyl-glucosaminyl transferase VI</fullName>
    </alternativeName>
    <alternativeName>
        <fullName evidence="4">Class-VI chitin synthase VI</fullName>
    </alternativeName>
</protein>
<dbReference type="EC" id="2.4.1.16" evidence="6"/>
<dbReference type="EMBL" id="GL698581">
    <property type="protein sequence ID" value="EFY85326.1"/>
    <property type="molecule type" value="Genomic_DNA"/>
</dbReference>
<dbReference type="RefSeq" id="XP_007814966.1">
    <property type="nucleotide sequence ID" value="XM_007816775.1"/>
</dbReference>
<dbReference type="SMR" id="E9EFH8"/>
<dbReference type="STRING" id="655827.E9EFH8"/>
<dbReference type="GeneID" id="19252937"/>
<dbReference type="KEGG" id="maw:19252937"/>
<dbReference type="eggNOG" id="KOG2571">
    <property type="taxonomic scope" value="Eukaryota"/>
</dbReference>
<dbReference type="HOGENOM" id="CLU_012773_1_1_1"/>
<dbReference type="InParanoid" id="E9EFH8"/>
<dbReference type="OMA" id="NCIHVFL"/>
<dbReference type="OrthoDB" id="5321960at2759"/>
<dbReference type="PHI-base" id="PHI:9490"/>
<dbReference type="Proteomes" id="UP000002499">
    <property type="component" value="Unassembled WGS sequence"/>
</dbReference>
<dbReference type="GO" id="GO:0030428">
    <property type="term" value="C:cell septum"/>
    <property type="evidence" value="ECO:0007669"/>
    <property type="project" value="TreeGrafter"/>
</dbReference>
<dbReference type="GO" id="GO:0005886">
    <property type="term" value="C:plasma membrane"/>
    <property type="evidence" value="ECO:0007669"/>
    <property type="project" value="UniProtKB-SubCell"/>
</dbReference>
<dbReference type="GO" id="GO:0004100">
    <property type="term" value="F:chitin synthase activity"/>
    <property type="evidence" value="ECO:0007669"/>
    <property type="project" value="UniProtKB-EC"/>
</dbReference>
<dbReference type="GO" id="GO:0006031">
    <property type="term" value="P:chitin biosynthetic process"/>
    <property type="evidence" value="ECO:0007669"/>
    <property type="project" value="TreeGrafter"/>
</dbReference>
<dbReference type="FunFam" id="3.90.550.10:FF:000077">
    <property type="entry name" value="Probable chitin synthase D"/>
    <property type="match status" value="1"/>
</dbReference>
<dbReference type="Gene3D" id="3.90.550.10">
    <property type="entry name" value="Spore Coat Polysaccharide Biosynthesis Protein SpsA, Chain A"/>
    <property type="match status" value="1"/>
</dbReference>
<dbReference type="InterPro" id="IPR004835">
    <property type="entry name" value="Chitin_synth"/>
</dbReference>
<dbReference type="InterPro" id="IPR029044">
    <property type="entry name" value="Nucleotide-diphossugar_trans"/>
</dbReference>
<dbReference type="PANTHER" id="PTHR22914">
    <property type="entry name" value="CHITIN SYNTHASE"/>
    <property type="match status" value="1"/>
</dbReference>
<dbReference type="PANTHER" id="PTHR22914:SF46">
    <property type="entry name" value="CHITIN SYNTHASE"/>
    <property type="match status" value="1"/>
</dbReference>
<dbReference type="Pfam" id="PF03142">
    <property type="entry name" value="Chitin_synth_2"/>
    <property type="match status" value="1"/>
</dbReference>
<dbReference type="SUPFAM" id="SSF53448">
    <property type="entry name" value="Nucleotide-diphospho-sugar transferases"/>
    <property type="match status" value="1"/>
</dbReference>
<feature type="chain" id="PRO_0000460865" description="Chitin synthase VI">
    <location>
        <begin position="1"/>
        <end position="636"/>
    </location>
</feature>
<feature type="transmembrane region" description="Helical" evidence="1">
    <location>
        <begin position="23"/>
        <end position="43"/>
    </location>
</feature>
<feature type="transmembrane region" description="Helical" evidence="1">
    <location>
        <begin position="374"/>
        <end position="394"/>
    </location>
</feature>
<feature type="transmembrane region" description="Helical" evidence="1">
    <location>
        <begin position="399"/>
        <end position="419"/>
    </location>
</feature>
<feature type="transmembrane region" description="Helical" evidence="1">
    <location>
        <begin position="427"/>
        <end position="447"/>
    </location>
</feature>
<feature type="region of interest" description="Disordered" evidence="2">
    <location>
        <begin position="595"/>
        <end position="636"/>
    </location>
</feature>
<feature type="compositionally biased region" description="Polar residues" evidence="2">
    <location>
        <begin position="607"/>
        <end position="627"/>
    </location>
</feature>
<accession>E9EFH8</accession>
<organism>
    <name type="scientific">Metarhizium acridum (strain CQMa 102)</name>
    <dbReference type="NCBI Taxonomy" id="655827"/>
    <lineage>
        <taxon>Eukaryota</taxon>
        <taxon>Fungi</taxon>
        <taxon>Dikarya</taxon>
        <taxon>Ascomycota</taxon>
        <taxon>Pezizomycotina</taxon>
        <taxon>Sordariomycetes</taxon>
        <taxon>Hypocreomycetidae</taxon>
        <taxon>Hypocreales</taxon>
        <taxon>Clavicipitaceae</taxon>
        <taxon>Metarhizium</taxon>
    </lineage>
</organism>
<name>CHS6_METAQ</name>